<sequence>MVHLTPEEKSAVTALWGKVNVDEVGGEALGRLLVVYPWTQRFFESFGDLSTPDAVMGNPKVKAHGKKVLGAFSDGLAHLDNLKGTFATLSELHCDKLHVDPENFKLLGNVLVCVLAHHFGKEFTPPVQAAYQKVVAGVANALAHKYH</sequence>
<reference key="1">
    <citation type="journal article" date="1992" name="J. Mol. Evol.">
        <title>Evolution of the primate beta-globin gene region: nucleotide sequence of the delta-beta-globin intergenic region of gorilla and phylogenetic relationships between African apes and man.</title>
        <authorList>
            <person name="Perrin-Pecontal P."/>
            <person name="Gouy M."/>
            <person name="Nigon V.M."/>
            <person name="Trabuchet G."/>
        </authorList>
    </citation>
    <scope>NUCLEOTIDE SEQUENCE [GENOMIC DNA] OF 1-121</scope>
</reference>
<reference key="2">
    <citation type="submission" date="1966-07" db="PIR data bank">
        <authorList>
            <person name="Zuckerkandl E."/>
        </authorList>
    </citation>
    <scope>PROTEIN SEQUENCE OF 2-147</scope>
</reference>
<organism>
    <name type="scientific">Gorilla gorilla gorilla</name>
    <name type="common">Western lowland gorilla</name>
    <dbReference type="NCBI Taxonomy" id="9595"/>
    <lineage>
        <taxon>Eukaryota</taxon>
        <taxon>Metazoa</taxon>
        <taxon>Chordata</taxon>
        <taxon>Craniata</taxon>
        <taxon>Vertebrata</taxon>
        <taxon>Euteleostomi</taxon>
        <taxon>Mammalia</taxon>
        <taxon>Eutheria</taxon>
        <taxon>Euarchontoglires</taxon>
        <taxon>Primates</taxon>
        <taxon>Haplorrhini</taxon>
        <taxon>Catarrhini</taxon>
        <taxon>Hominidae</taxon>
        <taxon>Gorilla</taxon>
    </lineage>
</organism>
<proteinExistence type="evidence at protein level"/>
<keyword id="KW-0007">Acetylation</keyword>
<keyword id="KW-0903">Direct protein sequencing</keyword>
<keyword id="KW-0349">Heme</keyword>
<keyword id="KW-0408">Iron</keyword>
<keyword id="KW-0479">Metal-binding</keyword>
<keyword id="KW-0561">Oxygen transport</keyword>
<keyword id="KW-0597">Phosphoprotein</keyword>
<keyword id="KW-1185">Reference proteome</keyword>
<keyword id="KW-0702">S-nitrosylation</keyword>
<keyword id="KW-0813">Transport</keyword>
<name>HBB_GORGO</name>
<gene>
    <name type="primary">HBB</name>
</gene>
<evidence type="ECO:0000250" key="1">
    <source>
        <dbReference type="UniProtKB" id="P02086"/>
    </source>
</evidence>
<evidence type="ECO:0000250" key="2">
    <source>
        <dbReference type="UniProtKB" id="P68871"/>
    </source>
</evidence>
<evidence type="ECO:0000255" key="3">
    <source>
        <dbReference type="PROSITE-ProRule" id="PRU00238"/>
    </source>
</evidence>
<evidence type="ECO:0000269" key="4">
    <source ref="2"/>
</evidence>
<accession>P02024</accession>
<protein>
    <recommendedName>
        <fullName>Hemoglobin subunit beta</fullName>
    </recommendedName>
    <alternativeName>
        <fullName>Beta-globin</fullName>
    </alternativeName>
    <alternativeName>
        <fullName>Hemoglobin beta chain</fullName>
    </alternativeName>
</protein>
<comment type="function">
    <text>Involved in oxygen transport from the lung to the various peripheral tissues.</text>
</comment>
<comment type="subunit">
    <text>Heterotetramer of two alpha chains and two beta chains.</text>
</comment>
<comment type="tissue specificity">
    <text>Red blood cells.</text>
</comment>
<comment type="similarity">
    <text evidence="3">Belongs to the globin family.</text>
</comment>
<feature type="initiator methionine" description="Removed" evidence="1 4">
    <location>
        <position position="1"/>
    </location>
</feature>
<feature type="chain" id="PRO_0000052966" description="Hemoglobin subunit beta">
    <location>
        <begin position="2"/>
        <end position="147"/>
    </location>
</feature>
<feature type="domain" description="Globin" evidence="3">
    <location>
        <begin position="3"/>
        <end position="147"/>
    </location>
</feature>
<feature type="binding site" description="distal binding residue">
    <location>
        <position position="64"/>
    </location>
    <ligand>
        <name>heme b</name>
        <dbReference type="ChEBI" id="CHEBI:60344"/>
    </ligand>
    <ligandPart>
        <name>Fe</name>
        <dbReference type="ChEBI" id="CHEBI:18248"/>
    </ligandPart>
</feature>
<feature type="binding site" description="proximal binding residue">
    <location>
        <position position="93"/>
    </location>
    <ligand>
        <name>heme b</name>
        <dbReference type="ChEBI" id="CHEBI:60344"/>
    </ligand>
    <ligandPart>
        <name>Fe</name>
        <dbReference type="ChEBI" id="CHEBI:18248"/>
    </ligandPart>
</feature>
<feature type="modified residue" description="N-acetylvaline" evidence="1">
    <location>
        <position position="2"/>
    </location>
</feature>
<feature type="modified residue" description="Phosphothreonine" evidence="2">
    <location>
        <position position="13"/>
    </location>
</feature>
<feature type="modified residue" description="Phosphoserine" evidence="2">
    <location>
        <position position="45"/>
    </location>
</feature>
<feature type="modified residue" description="N6-acetyllysine" evidence="2">
    <location>
        <position position="60"/>
    </location>
</feature>
<feature type="modified residue" description="N6-acetyllysine" evidence="2">
    <location>
        <position position="83"/>
    </location>
</feature>
<feature type="modified residue" description="S-nitrosocysteine" evidence="2">
    <location>
        <position position="94"/>
    </location>
</feature>
<feature type="modified residue" description="N6-acetyllysine" evidence="2">
    <location>
        <position position="145"/>
    </location>
</feature>
<dbReference type="EMBL" id="X61109">
    <property type="protein sequence ID" value="CAA43421.1"/>
    <property type="molecule type" value="Genomic_DNA"/>
</dbReference>
<dbReference type="PIR" id="S24304">
    <property type="entry name" value="HBGO"/>
</dbReference>
<dbReference type="BMRB" id="P02024"/>
<dbReference type="SMR" id="P02024"/>
<dbReference type="FunCoup" id="P02024">
    <property type="interactions" value="32"/>
</dbReference>
<dbReference type="STRING" id="9593.ENSGGOP00000022371"/>
<dbReference type="Ensembl" id="ENSGGOT00000034400.2">
    <property type="protein sequence ID" value="ENSGGOP00000022371.2"/>
    <property type="gene ID" value="ENSGGOG00000043805.1"/>
</dbReference>
<dbReference type="GeneID" id="101126932"/>
<dbReference type="KEGG" id="ggo:101126932"/>
<dbReference type="GeneTree" id="ENSGT00940000163476"/>
<dbReference type="InParanoid" id="P02024"/>
<dbReference type="OMA" id="HAIVSIW"/>
<dbReference type="OrthoDB" id="968at9604"/>
<dbReference type="Proteomes" id="UP000001519">
    <property type="component" value="Chromosome 11"/>
</dbReference>
<dbReference type="Bgee" id="ENSGGOG00000043805">
    <property type="expression patterns" value="Expressed in liver and 6 other cell types or tissues"/>
</dbReference>
<dbReference type="GO" id="GO:0005615">
    <property type="term" value="C:extracellular space"/>
    <property type="evidence" value="ECO:0007669"/>
    <property type="project" value="Ensembl"/>
</dbReference>
<dbReference type="GO" id="GO:0031838">
    <property type="term" value="C:haptoglobin-hemoglobin complex"/>
    <property type="evidence" value="ECO:0000318"/>
    <property type="project" value="GO_Central"/>
</dbReference>
<dbReference type="GO" id="GO:0005833">
    <property type="term" value="C:hemoglobin complex"/>
    <property type="evidence" value="ECO:0000318"/>
    <property type="project" value="GO_Central"/>
</dbReference>
<dbReference type="GO" id="GO:0031720">
    <property type="term" value="F:haptoglobin binding"/>
    <property type="evidence" value="ECO:0007669"/>
    <property type="project" value="Ensembl"/>
</dbReference>
<dbReference type="GO" id="GO:0020037">
    <property type="term" value="F:heme binding"/>
    <property type="evidence" value="ECO:0000318"/>
    <property type="project" value="GO_Central"/>
</dbReference>
<dbReference type="GO" id="GO:0031721">
    <property type="term" value="F:hemoglobin alpha binding"/>
    <property type="evidence" value="ECO:0000318"/>
    <property type="project" value="GO_Central"/>
</dbReference>
<dbReference type="GO" id="GO:0046872">
    <property type="term" value="F:metal ion binding"/>
    <property type="evidence" value="ECO:0007669"/>
    <property type="project" value="UniProtKB-KW"/>
</dbReference>
<dbReference type="GO" id="GO:0019825">
    <property type="term" value="F:oxygen binding"/>
    <property type="evidence" value="ECO:0000318"/>
    <property type="project" value="GO_Central"/>
</dbReference>
<dbReference type="GO" id="GO:0005344">
    <property type="term" value="F:oxygen carrier activity"/>
    <property type="evidence" value="ECO:0000318"/>
    <property type="project" value="GO_Central"/>
</dbReference>
<dbReference type="GO" id="GO:0004601">
    <property type="term" value="F:peroxidase activity"/>
    <property type="evidence" value="ECO:0007669"/>
    <property type="project" value="Ensembl"/>
</dbReference>
<dbReference type="GO" id="GO:0042744">
    <property type="term" value="P:hydrogen peroxide catabolic process"/>
    <property type="evidence" value="ECO:0000318"/>
    <property type="project" value="GO_Central"/>
</dbReference>
<dbReference type="GO" id="GO:0030185">
    <property type="term" value="P:nitric oxide transport"/>
    <property type="evidence" value="ECO:0007669"/>
    <property type="project" value="Ensembl"/>
</dbReference>
<dbReference type="GO" id="GO:0070293">
    <property type="term" value="P:renal absorption"/>
    <property type="evidence" value="ECO:0007669"/>
    <property type="project" value="Ensembl"/>
</dbReference>
<dbReference type="GO" id="GO:0042542">
    <property type="term" value="P:response to hydrogen peroxide"/>
    <property type="evidence" value="ECO:0007669"/>
    <property type="project" value="Ensembl"/>
</dbReference>
<dbReference type="CDD" id="cd08925">
    <property type="entry name" value="Hb-beta-like"/>
    <property type="match status" value="1"/>
</dbReference>
<dbReference type="FunFam" id="1.10.490.10:FF:000001">
    <property type="entry name" value="Hemoglobin subunit beta"/>
    <property type="match status" value="1"/>
</dbReference>
<dbReference type="Gene3D" id="1.10.490.10">
    <property type="entry name" value="Globins"/>
    <property type="match status" value="1"/>
</dbReference>
<dbReference type="InterPro" id="IPR000971">
    <property type="entry name" value="Globin"/>
</dbReference>
<dbReference type="InterPro" id="IPR009050">
    <property type="entry name" value="Globin-like_sf"/>
</dbReference>
<dbReference type="InterPro" id="IPR012292">
    <property type="entry name" value="Globin/Proto"/>
</dbReference>
<dbReference type="InterPro" id="IPR002337">
    <property type="entry name" value="Hemoglobin_b"/>
</dbReference>
<dbReference type="InterPro" id="IPR050056">
    <property type="entry name" value="Hemoglobin_oxygen_transport"/>
</dbReference>
<dbReference type="PANTHER" id="PTHR11442">
    <property type="entry name" value="HEMOGLOBIN FAMILY MEMBER"/>
    <property type="match status" value="1"/>
</dbReference>
<dbReference type="PANTHER" id="PTHR11442:SF42">
    <property type="entry name" value="HEMOGLOBIN SUBUNIT BETA"/>
    <property type="match status" value="1"/>
</dbReference>
<dbReference type="Pfam" id="PF00042">
    <property type="entry name" value="Globin"/>
    <property type="match status" value="1"/>
</dbReference>
<dbReference type="PRINTS" id="PR00814">
    <property type="entry name" value="BETAHAEM"/>
</dbReference>
<dbReference type="SUPFAM" id="SSF46458">
    <property type="entry name" value="Globin-like"/>
    <property type="match status" value="1"/>
</dbReference>
<dbReference type="PROSITE" id="PS01033">
    <property type="entry name" value="GLOBIN"/>
    <property type="match status" value="1"/>
</dbReference>